<organism>
    <name type="scientific">Limosilactobacillus fermentum (strain NBRC 3956 / LMG 18251)</name>
    <name type="common">Lactobacillus fermentum</name>
    <dbReference type="NCBI Taxonomy" id="334390"/>
    <lineage>
        <taxon>Bacteria</taxon>
        <taxon>Bacillati</taxon>
        <taxon>Bacillota</taxon>
        <taxon>Bacilli</taxon>
        <taxon>Lactobacillales</taxon>
        <taxon>Lactobacillaceae</taxon>
        <taxon>Limosilactobacillus</taxon>
    </lineage>
</organism>
<feature type="chain" id="PRO_1000091551" description="Serine hydroxymethyltransferase">
    <location>
        <begin position="1"/>
        <end position="411"/>
    </location>
</feature>
<feature type="binding site" evidence="1">
    <location>
        <begin position="120"/>
        <end position="122"/>
    </location>
    <ligand>
        <name>(6S)-5,6,7,8-tetrahydrofolate</name>
        <dbReference type="ChEBI" id="CHEBI:57453"/>
    </ligand>
</feature>
<feature type="binding site" evidence="1">
    <location>
        <position position="241"/>
    </location>
    <ligand>
        <name>(6S)-5,6,7,8-tetrahydrofolate</name>
        <dbReference type="ChEBI" id="CHEBI:57453"/>
    </ligand>
</feature>
<feature type="binding site" evidence="1">
    <location>
        <begin position="350"/>
        <end position="352"/>
    </location>
    <ligand>
        <name>(6S)-5,6,7,8-tetrahydrofolate</name>
        <dbReference type="ChEBI" id="CHEBI:57453"/>
    </ligand>
</feature>
<feature type="site" description="Plays an important role in substrate specificity" evidence="1">
    <location>
        <position position="224"/>
    </location>
</feature>
<feature type="modified residue" description="N6-(pyridoxal phosphate)lysine" evidence="1">
    <location>
        <position position="225"/>
    </location>
</feature>
<name>GLYA_LIMF3</name>
<keyword id="KW-0028">Amino-acid biosynthesis</keyword>
<keyword id="KW-0963">Cytoplasm</keyword>
<keyword id="KW-0554">One-carbon metabolism</keyword>
<keyword id="KW-0663">Pyridoxal phosphate</keyword>
<keyword id="KW-1185">Reference proteome</keyword>
<keyword id="KW-0808">Transferase</keyword>
<gene>
    <name evidence="1" type="primary">glyA</name>
    <name type="ordered locus">LAF_0430</name>
</gene>
<proteinExistence type="inferred from homology"/>
<dbReference type="EC" id="2.1.2.1" evidence="1"/>
<dbReference type="EMBL" id="AP008937">
    <property type="protein sequence ID" value="BAG26766.1"/>
    <property type="molecule type" value="Genomic_DNA"/>
</dbReference>
<dbReference type="RefSeq" id="WP_012390916.1">
    <property type="nucleotide sequence ID" value="NC_010610.1"/>
</dbReference>
<dbReference type="SMR" id="B2GAT4"/>
<dbReference type="KEGG" id="lfe:LAF_0430"/>
<dbReference type="PATRIC" id="fig|334390.5.peg.469"/>
<dbReference type="eggNOG" id="COG0112">
    <property type="taxonomic scope" value="Bacteria"/>
</dbReference>
<dbReference type="HOGENOM" id="CLU_022477_2_1_9"/>
<dbReference type="UniPathway" id="UPA00193"/>
<dbReference type="UniPathway" id="UPA00288">
    <property type="reaction ID" value="UER01023"/>
</dbReference>
<dbReference type="Proteomes" id="UP000001697">
    <property type="component" value="Chromosome"/>
</dbReference>
<dbReference type="GO" id="GO:0005829">
    <property type="term" value="C:cytosol"/>
    <property type="evidence" value="ECO:0007669"/>
    <property type="project" value="TreeGrafter"/>
</dbReference>
<dbReference type="GO" id="GO:0004372">
    <property type="term" value="F:glycine hydroxymethyltransferase activity"/>
    <property type="evidence" value="ECO:0007669"/>
    <property type="project" value="UniProtKB-UniRule"/>
</dbReference>
<dbReference type="GO" id="GO:0030170">
    <property type="term" value="F:pyridoxal phosphate binding"/>
    <property type="evidence" value="ECO:0007669"/>
    <property type="project" value="UniProtKB-UniRule"/>
</dbReference>
<dbReference type="GO" id="GO:0019264">
    <property type="term" value="P:glycine biosynthetic process from serine"/>
    <property type="evidence" value="ECO:0007669"/>
    <property type="project" value="UniProtKB-UniRule"/>
</dbReference>
<dbReference type="GO" id="GO:0035999">
    <property type="term" value="P:tetrahydrofolate interconversion"/>
    <property type="evidence" value="ECO:0007669"/>
    <property type="project" value="UniProtKB-UniRule"/>
</dbReference>
<dbReference type="CDD" id="cd00378">
    <property type="entry name" value="SHMT"/>
    <property type="match status" value="1"/>
</dbReference>
<dbReference type="FunFam" id="3.40.640.10:FF:000001">
    <property type="entry name" value="Serine hydroxymethyltransferase"/>
    <property type="match status" value="1"/>
</dbReference>
<dbReference type="Gene3D" id="3.90.1150.10">
    <property type="entry name" value="Aspartate Aminotransferase, domain 1"/>
    <property type="match status" value="1"/>
</dbReference>
<dbReference type="Gene3D" id="3.40.640.10">
    <property type="entry name" value="Type I PLP-dependent aspartate aminotransferase-like (Major domain)"/>
    <property type="match status" value="1"/>
</dbReference>
<dbReference type="HAMAP" id="MF_00051">
    <property type="entry name" value="SHMT"/>
    <property type="match status" value="1"/>
</dbReference>
<dbReference type="InterPro" id="IPR015424">
    <property type="entry name" value="PyrdxlP-dep_Trfase"/>
</dbReference>
<dbReference type="InterPro" id="IPR015421">
    <property type="entry name" value="PyrdxlP-dep_Trfase_major"/>
</dbReference>
<dbReference type="InterPro" id="IPR015422">
    <property type="entry name" value="PyrdxlP-dep_Trfase_small"/>
</dbReference>
<dbReference type="InterPro" id="IPR001085">
    <property type="entry name" value="Ser_HO-MeTrfase"/>
</dbReference>
<dbReference type="InterPro" id="IPR049943">
    <property type="entry name" value="Ser_HO-MeTrfase-like"/>
</dbReference>
<dbReference type="InterPro" id="IPR019798">
    <property type="entry name" value="Ser_HO-MeTrfase_PLP_BS"/>
</dbReference>
<dbReference type="InterPro" id="IPR039429">
    <property type="entry name" value="SHMT-like_dom"/>
</dbReference>
<dbReference type="NCBIfam" id="NF000586">
    <property type="entry name" value="PRK00011.1"/>
    <property type="match status" value="1"/>
</dbReference>
<dbReference type="PANTHER" id="PTHR11680">
    <property type="entry name" value="SERINE HYDROXYMETHYLTRANSFERASE"/>
    <property type="match status" value="1"/>
</dbReference>
<dbReference type="PANTHER" id="PTHR11680:SF35">
    <property type="entry name" value="SERINE HYDROXYMETHYLTRANSFERASE 1"/>
    <property type="match status" value="1"/>
</dbReference>
<dbReference type="Pfam" id="PF00464">
    <property type="entry name" value="SHMT"/>
    <property type="match status" value="1"/>
</dbReference>
<dbReference type="PIRSF" id="PIRSF000412">
    <property type="entry name" value="SHMT"/>
    <property type="match status" value="1"/>
</dbReference>
<dbReference type="SUPFAM" id="SSF53383">
    <property type="entry name" value="PLP-dependent transferases"/>
    <property type="match status" value="1"/>
</dbReference>
<dbReference type="PROSITE" id="PS00096">
    <property type="entry name" value="SHMT"/>
    <property type="match status" value="1"/>
</dbReference>
<reference key="1">
    <citation type="journal article" date="2008" name="DNA Res.">
        <title>Comparative genome analysis of Lactobacillus reuteri and Lactobacillus fermentum reveal a genomic island for reuterin and cobalamin production.</title>
        <authorList>
            <person name="Morita H."/>
            <person name="Toh H."/>
            <person name="Fukuda S."/>
            <person name="Horikawa H."/>
            <person name="Oshima K."/>
            <person name="Suzuki T."/>
            <person name="Murakami M."/>
            <person name="Hisamatsu S."/>
            <person name="Kato Y."/>
            <person name="Takizawa T."/>
            <person name="Fukuoka H."/>
            <person name="Yoshimura T."/>
            <person name="Itoh K."/>
            <person name="O'Sullivan D.J."/>
            <person name="McKay L.L."/>
            <person name="Ohno H."/>
            <person name="Kikuchi J."/>
            <person name="Masaoka T."/>
            <person name="Hattori M."/>
        </authorList>
    </citation>
    <scope>NUCLEOTIDE SEQUENCE [LARGE SCALE GENOMIC DNA]</scope>
    <source>
        <strain>NBRC 3956 / LMG 18251</strain>
    </source>
</reference>
<evidence type="ECO:0000255" key="1">
    <source>
        <dbReference type="HAMAP-Rule" id="MF_00051"/>
    </source>
</evidence>
<accession>B2GAT4</accession>
<sequence>MEYAGKDAQLWAAIGREEQRQEGTIELIASENIVSKEVAAAQGSVLTNKYAEGYPGKRYYGGCQFIDQVEQLAIDHAKELFGAAYANVQPHSGSQANMAVYQALLKPGDTILGMGMDAGGHLTHGSKVNFSGKLYHTYGYELSPETEELDYDAILAQAKEIQPQLIVAGASAYSQIIDWDKFRQIADEVGAYLMVDMAHIAGLVATGYHPNPVPVADVVTTTTHKTLRGPRGGMILSKSEELGKKLNSAVFPGTQGGPLEHVIAGKAQAFYEDLQPAFKDYIGQVVKNAAAMAEVFNESETIRVVTGGTANHLLVLDLTKTGLTGKDAQALLDSVMITTNKEAIPNDQRSPFVTSGLRVGTPAITSRGFKEDDAKQVASLIIKALDNADDQTILAEVKEAVHALTQAHPVD</sequence>
<protein>
    <recommendedName>
        <fullName evidence="1">Serine hydroxymethyltransferase</fullName>
        <shortName evidence="1">SHMT</shortName>
        <shortName evidence="1">Serine methylase</shortName>
        <ecNumber evidence="1">2.1.2.1</ecNumber>
    </recommendedName>
</protein>
<comment type="function">
    <text evidence="1">Catalyzes the reversible interconversion of serine and glycine with tetrahydrofolate (THF) serving as the one-carbon carrier. This reaction serves as the major source of one-carbon groups required for the biosynthesis of purines, thymidylate, methionine, and other important biomolecules. Also exhibits THF-independent aldolase activity toward beta-hydroxyamino acids, producing glycine and aldehydes, via a retro-aldol mechanism.</text>
</comment>
<comment type="catalytic activity">
    <reaction evidence="1">
        <text>(6R)-5,10-methylene-5,6,7,8-tetrahydrofolate + glycine + H2O = (6S)-5,6,7,8-tetrahydrofolate + L-serine</text>
        <dbReference type="Rhea" id="RHEA:15481"/>
        <dbReference type="ChEBI" id="CHEBI:15377"/>
        <dbReference type="ChEBI" id="CHEBI:15636"/>
        <dbReference type="ChEBI" id="CHEBI:33384"/>
        <dbReference type="ChEBI" id="CHEBI:57305"/>
        <dbReference type="ChEBI" id="CHEBI:57453"/>
        <dbReference type="EC" id="2.1.2.1"/>
    </reaction>
</comment>
<comment type="cofactor">
    <cofactor evidence="1">
        <name>pyridoxal 5'-phosphate</name>
        <dbReference type="ChEBI" id="CHEBI:597326"/>
    </cofactor>
</comment>
<comment type="pathway">
    <text evidence="1">One-carbon metabolism; tetrahydrofolate interconversion.</text>
</comment>
<comment type="pathway">
    <text evidence="1">Amino-acid biosynthesis; glycine biosynthesis; glycine from L-serine: step 1/1.</text>
</comment>
<comment type="subunit">
    <text evidence="1">Homodimer.</text>
</comment>
<comment type="subcellular location">
    <subcellularLocation>
        <location evidence="1">Cytoplasm</location>
    </subcellularLocation>
</comment>
<comment type="similarity">
    <text evidence="1">Belongs to the SHMT family.</text>
</comment>